<protein>
    <recommendedName>
        <fullName evidence="1">Nucleoside triphosphatase NudI</fullName>
        <ecNumber evidence="1">3.6.1.9</ecNumber>
    </recommendedName>
    <alternativeName>
        <fullName evidence="1">Nucleotide diphosphatase NudI</fullName>
    </alternativeName>
    <alternativeName>
        <fullName evidence="1">Pyrimidine deoxynucleoside triphosphate diphosphatase</fullName>
    </alternativeName>
    <alternativeName>
        <fullName evidence="1">dCTP diphosphatase</fullName>
        <ecNumber evidence="1">3.6.1.12</ecNumber>
    </alternativeName>
    <alternativeName>
        <fullName evidence="1">dTTP diphosphatase</fullName>
        <ecNumber evidence="1">3.6.1.-</ecNumber>
    </alternativeName>
    <alternativeName>
        <fullName evidence="1">dUTP diphosphatase</fullName>
        <ecNumber evidence="1">3.6.1.23</ecNumber>
    </alternativeName>
</protein>
<accession>B1X8W4</accession>
<feature type="chain" id="PRO_0000342125" description="Nucleoside triphosphatase NudI">
    <location>
        <begin position="1"/>
        <end position="141"/>
    </location>
</feature>
<feature type="domain" description="Nudix hydrolase" evidence="1">
    <location>
        <begin position="1"/>
        <end position="141"/>
    </location>
</feature>
<feature type="short sequence motif" description="Nudix box">
    <location>
        <begin position="38"/>
        <end position="59"/>
    </location>
</feature>
<gene>
    <name evidence="1" type="primary">nudI</name>
    <name type="ordered locus">ECDH10B_2411</name>
</gene>
<sequence>MRQRTIVCPLIQNDGAYLLCKMADDRGVFPGQWAISGGGVEPGERIEEALRREIREELGEQLLLTEITPWTFSDDIRTKTYADGRKEEIYMIYLIFDCVSANREVKINEEFQDYAWVKPEDLVHYDLNVATRKTLRLKGLL</sequence>
<evidence type="ECO:0000255" key="1">
    <source>
        <dbReference type="HAMAP-Rule" id="MF_01846"/>
    </source>
</evidence>
<reference key="1">
    <citation type="journal article" date="2008" name="J. Bacteriol.">
        <title>The complete genome sequence of Escherichia coli DH10B: insights into the biology of a laboratory workhorse.</title>
        <authorList>
            <person name="Durfee T."/>
            <person name="Nelson R."/>
            <person name="Baldwin S."/>
            <person name="Plunkett G. III"/>
            <person name="Burland V."/>
            <person name="Mau B."/>
            <person name="Petrosino J.F."/>
            <person name="Qin X."/>
            <person name="Muzny D.M."/>
            <person name="Ayele M."/>
            <person name="Gibbs R.A."/>
            <person name="Csorgo B."/>
            <person name="Posfai G."/>
            <person name="Weinstock G.M."/>
            <person name="Blattner F.R."/>
        </authorList>
    </citation>
    <scope>NUCLEOTIDE SEQUENCE [LARGE SCALE GENOMIC DNA]</scope>
    <source>
        <strain>K12 / DH10B</strain>
    </source>
</reference>
<dbReference type="EC" id="3.6.1.9" evidence="1"/>
<dbReference type="EC" id="3.6.1.12" evidence="1"/>
<dbReference type="EC" id="3.6.1.-" evidence="1"/>
<dbReference type="EC" id="3.6.1.23" evidence="1"/>
<dbReference type="EMBL" id="CP000948">
    <property type="protein sequence ID" value="ACB03411.1"/>
    <property type="molecule type" value="Genomic_DNA"/>
</dbReference>
<dbReference type="RefSeq" id="WP_001300564.1">
    <property type="nucleotide sequence ID" value="NC_010473.1"/>
</dbReference>
<dbReference type="SMR" id="B1X8W4"/>
<dbReference type="KEGG" id="ecd:ECDH10B_2411"/>
<dbReference type="HOGENOM" id="CLU_037162_31_0_6"/>
<dbReference type="GO" id="GO:0047840">
    <property type="term" value="F:dCTP diphosphatase activity"/>
    <property type="evidence" value="ECO:0007669"/>
    <property type="project" value="UniProtKB-EC"/>
</dbReference>
<dbReference type="GO" id="GO:0036218">
    <property type="term" value="F:dTTP diphosphatase activity"/>
    <property type="evidence" value="ECO:0007669"/>
    <property type="project" value="RHEA"/>
</dbReference>
<dbReference type="GO" id="GO:0004170">
    <property type="term" value="F:dUTP diphosphatase activity"/>
    <property type="evidence" value="ECO:0007669"/>
    <property type="project" value="UniProtKB-EC"/>
</dbReference>
<dbReference type="GO" id="GO:0000287">
    <property type="term" value="F:magnesium ion binding"/>
    <property type="evidence" value="ECO:0007669"/>
    <property type="project" value="UniProtKB-UniRule"/>
</dbReference>
<dbReference type="FunFam" id="3.90.79.10:FF:000039">
    <property type="entry name" value="Nucleoside triphosphatase NudI"/>
    <property type="match status" value="1"/>
</dbReference>
<dbReference type="Gene3D" id="3.90.79.10">
    <property type="entry name" value="Nucleoside Triphosphate Pyrophosphohydrolase"/>
    <property type="match status" value="1"/>
</dbReference>
<dbReference type="HAMAP" id="MF_01846">
    <property type="entry name" value="Nudix_NudI"/>
    <property type="match status" value="1"/>
</dbReference>
<dbReference type="InterPro" id="IPR023781">
    <property type="entry name" value="Nucleoside_triphosphatase_NudI"/>
</dbReference>
<dbReference type="InterPro" id="IPR020476">
    <property type="entry name" value="Nudix_hydrolase"/>
</dbReference>
<dbReference type="InterPro" id="IPR015797">
    <property type="entry name" value="NUDIX_hydrolase-like_dom_sf"/>
</dbReference>
<dbReference type="InterPro" id="IPR020084">
    <property type="entry name" value="NUDIX_hydrolase_CS"/>
</dbReference>
<dbReference type="InterPro" id="IPR000086">
    <property type="entry name" value="NUDIX_hydrolase_dom"/>
</dbReference>
<dbReference type="NCBIfam" id="NF012016">
    <property type="entry name" value="PRK15472.1"/>
    <property type="match status" value="1"/>
</dbReference>
<dbReference type="PANTHER" id="PTHR43046">
    <property type="entry name" value="GDP-MANNOSE MANNOSYL HYDROLASE"/>
    <property type="match status" value="1"/>
</dbReference>
<dbReference type="PANTHER" id="PTHR43046:SF14">
    <property type="entry name" value="MUTT_NUDIX FAMILY PROTEIN"/>
    <property type="match status" value="1"/>
</dbReference>
<dbReference type="Pfam" id="PF00293">
    <property type="entry name" value="NUDIX"/>
    <property type="match status" value="1"/>
</dbReference>
<dbReference type="PRINTS" id="PR00502">
    <property type="entry name" value="NUDIXFAMILY"/>
</dbReference>
<dbReference type="SUPFAM" id="SSF55811">
    <property type="entry name" value="Nudix"/>
    <property type="match status" value="1"/>
</dbReference>
<dbReference type="PROSITE" id="PS51462">
    <property type="entry name" value="NUDIX"/>
    <property type="match status" value="1"/>
</dbReference>
<dbReference type="PROSITE" id="PS00893">
    <property type="entry name" value="NUDIX_BOX"/>
    <property type="match status" value="1"/>
</dbReference>
<keyword id="KW-0378">Hydrolase</keyword>
<keyword id="KW-0460">Magnesium</keyword>
<name>NUDI_ECODH</name>
<proteinExistence type="inferred from homology"/>
<organism>
    <name type="scientific">Escherichia coli (strain K12 / DH10B)</name>
    <dbReference type="NCBI Taxonomy" id="316385"/>
    <lineage>
        <taxon>Bacteria</taxon>
        <taxon>Pseudomonadati</taxon>
        <taxon>Pseudomonadota</taxon>
        <taxon>Gammaproteobacteria</taxon>
        <taxon>Enterobacterales</taxon>
        <taxon>Enterobacteriaceae</taxon>
        <taxon>Escherichia</taxon>
    </lineage>
</organism>
<comment type="function">
    <text evidence="1">Catalyzes the hydrolysis of nucleoside triphosphates, with a preference for pyrimidine deoxynucleoside triphosphates (dUTP, dTTP and dCTP).</text>
</comment>
<comment type="catalytic activity">
    <reaction evidence="1">
        <text>a ribonucleoside 5'-triphosphate + H2O = a ribonucleoside 5'-phosphate + diphosphate + H(+)</text>
        <dbReference type="Rhea" id="RHEA:23996"/>
        <dbReference type="ChEBI" id="CHEBI:15377"/>
        <dbReference type="ChEBI" id="CHEBI:15378"/>
        <dbReference type="ChEBI" id="CHEBI:33019"/>
        <dbReference type="ChEBI" id="CHEBI:58043"/>
        <dbReference type="ChEBI" id="CHEBI:61557"/>
        <dbReference type="EC" id="3.6.1.9"/>
    </reaction>
</comment>
<comment type="catalytic activity">
    <reaction evidence="1">
        <text>a 2'-deoxyribonucleoside 5'-triphosphate + H2O = a 2'-deoxyribonucleoside 5'-phosphate + diphosphate + H(+)</text>
        <dbReference type="Rhea" id="RHEA:44644"/>
        <dbReference type="ChEBI" id="CHEBI:15377"/>
        <dbReference type="ChEBI" id="CHEBI:15378"/>
        <dbReference type="ChEBI" id="CHEBI:33019"/>
        <dbReference type="ChEBI" id="CHEBI:61560"/>
        <dbReference type="ChEBI" id="CHEBI:65317"/>
        <dbReference type="EC" id="3.6.1.9"/>
    </reaction>
</comment>
<comment type="catalytic activity">
    <reaction evidence="1">
        <text>dUTP + H2O = dUMP + diphosphate + H(+)</text>
        <dbReference type="Rhea" id="RHEA:10248"/>
        <dbReference type="ChEBI" id="CHEBI:15377"/>
        <dbReference type="ChEBI" id="CHEBI:15378"/>
        <dbReference type="ChEBI" id="CHEBI:33019"/>
        <dbReference type="ChEBI" id="CHEBI:61555"/>
        <dbReference type="ChEBI" id="CHEBI:246422"/>
        <dbReference type="EC" id="3.6.1.9"/>
    </reaction>
</comment>
<comment type="catalytic activity">
    <reaction evidence="1">
        <text>dUTP + H2O = dUMP + diphosphate + H(+)</text>
        <dbReference type="Rhea" id="RHEA:10248"/>
        <dbReference type="ChEBI" id="CHEBI:15377"/>
        <dbReference type="ChEBI" id="CHEBI:15378"/>
        <dbReference type="ChEBI" id="CHEBI:33019"/>
        <dbReference type="ChEBI" id="CHEBI:61555"/>
        <dbReference type="ChEBI" id="CHEBI:246422"/>
        <dbReference type="EC" id="3.6.1.23"/>
    </reaction>
</comment>
<comment type="catalytic activity">
    <reaction evidence="1">
        <text>dTTP + H2O = dTMP + diphosphate + H(+)</text>
        <dbReference type="Rhea" id="RHEA:28534"/>
        <dbReference type="ChEBI" id="CHEBI:15377"/>
        <dbReference type="ChEBI" id="CHEBI:15378"/>
        <dbReference type="ChEBI" id="CHEBI:33019"/>
        <dbReference type="ChEBI" id="CHEBI:37568"/>
        <dbReference type="ChEBI" id="CHEBI:63528"/>
        <dbReference type="EC" id="3.6.1.9"/>
    </reaction>
</comment>
<comment type="catalytic activity">
    <reaction evidence="1">
        <text>dCTP + H2O = dCMP + diphosphate + H(+)</text>
        <dbReference type="Rhea" id="RHEA:22636"/>
        <dbReference type="ChEBI" id="CHEBI:15377"/>
        <dbReference type="ChEBI" id="CHEBI:15378"/>
        <dbReference type="ChEBI" id="CHEBI:33019"/>
        <dbReference type="ChEBI" id="CHEBI:57566"/>
        <dbReference type="ChEBI" id="CHEBI:61481"/>
        <dbReference type="EC" id="3.6.1.9"/>
    </reaction>
</comment>
<comment type="catalytic activity">
    <reaction evidence="1">
        <text>dCTP + H2O = dCMP + diphosphate + H(+)</text>
        <dbReference type="Rhea" id="RHEA:22636"/>
        <dbReference type="ChEBI" id="CHEBI:15377"/>
        <dbReference type="ChEBI" id="CHEBI:15378"/>
        <dbReference type="ChEBI" id="CHEBI:33019"/>
        <dbReference type="ChEBI" id="CHEBI:57566"/>
        <dbReference type="ChEBI" id="CHEBI:61481"/>
        <dbReference type="EC" id="3.6.1.12"/>
    </reaction>
</comment>
<comment type="cofactor">
    <cofactor evidence="1">
        <name>Mg(2+)</name>
        <dbReference type="ChEBI" id="CHEBI:18420"/>
    </cofactor>
</comment>
<comment type="subunit">
    <text evidence="1">Monomer.</text>
</comment>
<comment type="similarity">
    <text evidence="1">Belongs to the Nudix hydrolase family. NudI subfamily.</text>
</comment>